<reference key="1">
    <citation type="journal article" date="2005" name="Genome Res.">
        <title>Comparative and functional genomic analyses of the pathogenicity of phytopathogen Xanthomonas campestris pv. campestris.</title>
        <authorList>
            <person name="Qian W."/>
            <person name="Jia Y."/>
            <person name="Ren S.-X."/>
            <person name="He Y.-Q."/>
            <person name="Feng J.-X."/>
            <person name="Lu L.-F."/>
            <person name="Sun Q."/>
            <person name="Ying G."/>
            <person name="Tang D.-J."/>
            <person name="Tang H."/>
            <person name="Wu W."/>
            <person name="Hao P."/>
            <person name="Wang L."/>
            <person name="Jiang B.-L."/>
            <person name="Zeng S."/>
            <person name="Gu W.-Y."/>
            <person name="Lu G."/>
            <person name="Rong L."/>
            <person name="Tian Y."/>
            <person name="Yao Z."/>
            <person name="Fu G."/>
            <person name="Chen B."/>
            <person name="Fang R."/>
            <person name="Qiang B."/>
            <person name="Chen Z."/>
            <person name="Zhao G.-P."/>
            <person name="Tang J.-L."/>
            <person name="He C."/>
        </authorList>
    </citation>
    <scope>NUCLEOTIDE SEQUENCE [LARGE SCALE GENOMIC DNA]</scope>
    <source>
        <strain>8004</strain>
    </source>
</reference>
<name>ILVC_XANC8</name>
<feature type="chain" id="PRO_0000226212" description="Ketol-acid reductoisomerase (NADP(+))">
    <location>
        <begin position="1"/>
        <end position="333"/>
    </location>
</feature>
<feature type="domain" description="KARI N-terminal Rossmann" evidence="2">
    <location>
        <begin position="1"/>
        <end position="171"/>
    </location>
</feature>
<feature type="domain" description="KARI C-terminal knotted" evidence="3">
    <location>
        <begin position="172"/>
        <end position="317"/>
    </location>
</feature>
<feature type="active site" evidence="1">
    <location>
        <position position="97"/>
    </location>
</feature>
<feature type="binding site" evidence="1">
    <location>
        <begin position="14"/>
        <end position="17"/>
    </location>
    <ligand>
        <name>NADP(+)</name>
        <dbReference type="ChEBI" id="CHEBI:58349"/>
    </ligand>
</feature>
<feature type="binding site" evidence="1">
    <location>
        <position position="37"/>
    </location>
    <ligand>
        <name>NADP(+)</name>
        <dbReference type="ChEBI" id="CHEBI:58349"/>
    </ligand>
</feature>
<feature type="binding site" evidence="1">
    <location>
        <position position="42"/>
    </location>
    <ligand>
        <name>NADP(+)</name>
        <dbReference type="ChEBI" id="CHEBI:58349"/>
    </ligand>
</feature>
<feature type="binding site" evidence="1">
    <location>
        <begin position="72"/>
        <end position="75"/>
    </location>
    <ligand>
        <name>NADP(+)</name>
        <dbReference type="ChEBI" id="CHEBI:58349"/>
    </ligand>
</feature>
<feature type="binding site" evidence="1">
    <location>
        <position position="123"/>
    </location>
    <ligand>
        <name>NADP(+)</name>
        <dbReference type="ChEBI" id="CHEBI:58349"/>
    </ligand>
</feature>
<feature type="binding site" evidence="1">
    <location>
        <position position="180"/>
    </location>
    <ligand>
        <name>Mg(2+)</name>
        <dbReference type="ChEBI" id="CHEBI:18420"/>
        <label>1</label>
    </ligand>
</feature>
<feature type="binding site" evidence="1">
    <location>
        <position position="180"/>
    </location>
    <ligand>
        <name>Mg(2+)</name>
        <dbReference type="ChEBI" id="CHEBI:18420"/>
        <label>2</label>
    </ligand>
</feature>
<feature type="binding site" evidence="1">
    <location>
        <position position="184"/>
    </location>
    <ligand>
        <name>Mg(2+)</name>
        <dbReference type="ChEBI" id="CHEBI:18420"/>
        <label>1</label>
    </ligand>
</feature>
<feature type="binding site" evidence="1">
    <location>
        <position position="216"/>
    </location>
    <ligand>
        <name>Mg(2+)</name>
        <dbReference type="ChEBI" id="CHEBI:18420"/>
        <label>2</label>
    </ligand>
</feature>
<feature type="binding site" evidence="1">
    <location>
        <position position="220"/>
    </location>
    <ligand>
        <name>Mg(2+)</name>
        <dbReference type="ChEBI" id="CHEBI:18420"/>
        <label>2</label>
    </ligand>
</feature>
<feature type="binding site" evidence="1">
    <location>
        <position position="241"/>
    </location>
    <ligand>
        <name>substrate</name>
    </ligand>
</feature>
<keyword id="KW-0028">Amino-acid biosynthesis</keyword>
<keyword id="KW-0100">Branched-chain amino acid biosynthesis</keyword>
<keyword id="KW-0460">Magnesium</keyword>
<keyword id="KW-0479">Metal-binding</keyword>
<keyword id="KW-0521">NADP</keyword>
<keyword id="KW-0560">Oxidoreductase</keyword>
<accession>Q4UYF7</accession>
<sequence length="333" mass="36026">MSNDTQPTIAIIGYGSQGRAHALNLRDSGFDVTVGLRPGGPTEAKAQADGFTVVAPAEAVKTADLVAVLTPDMVQKKLYEEVIAPNMKQGACLLFAHGLNVHFDMIKPRADLDVVLVAPKGPGALVRREYEIGRGVPCIYAVYQDTSGKAEQFALTYAGGLGGARANIIKTTFKEETETDLFGEQAVLCGGASSLVQAGFEVLVEAGYQPEIAYYEVLHELKLIVDLFYEGGITRMLEFVSETAQYGDYVSGPRVIDASTKARMKDVLTDIQNGTFTKNWVAEYEAGLPNYTKFKQADLEHPIEEVGKKLRAKMVWLNGEQQAAATPAKQQAA</sequence>
<protein>
    <recommendedName>
        <fullName evidence="1">Ketol-acid reductoisomerase (NADP(+))</fullName>
        <shortName evidence="1">KARI</shortName>
        <ecNumber evidence="1">1.1.1.86</ecNumber>
    </recommendedName>
    <alternativeName>
        <fullName evidence="1">Acetohydroxy-acid isomeroreductase</fullName>
        <shortName evidence="1">AHIR</shortName>
    </alternativeName>
    <alternativeName>
        <fullName evidence="1">Alpha-keto-beta-hydroxylacyl reductoisomerase</fullName>
    </alternativeName>
    <alternativeName>
        <fullName evidence="1">Ketol-acid reductoisomerase type 1</fullName>
    </alternativeName>
    <alternativeName>
        <fullName evidence="1">Ketol-acid reductoisomerase type I</fullName>
    </alternativeName>
</protein>
<gene>
    <name evidence="1" type="primary">ilvC</name>
    <name type="ordered locus">XC_0841</name>
</gene>
<evidence type="ECO:0000255" key="1">
    <source>
        <dbReference type="HAMAP-Rule" id="MF_00435"/>
    </source>
</evidence>
<evidence type="ECO:0000255" key="2">
    <source>
        <dbReference type="PROSITE-ProRule" id="PRU01197"/>
    </source>
</evidence>
<evidence type="ECO:0000255" key="3">
    <source>
        <dbReference type="PROSITE-ProRule" id="PRU01198"/>
    </source>
</evidence>
<organism>
    <name type="scientific">Xanthomonas campestris pv. campestris (strain 8004)</name>
    <dbReference type="NCBI Taxonomy" id="314565"/>
    <lineage>
        <taxon>Bacteria</taxon>
        <taxon>Pseudomonadati</taxon>
        <taxon>Pseudomonadota</taxon>
        <taxon>Gammaproteobacteria</taxon>
        <taxon>Lysobacterales</taxon>
        <taxon>Lysobacteraceae</taxon>
        <taxon>Xanthomonas</taxon>
    </lineage>
</organism>
<dbReference type="EC" id="1.1.1.86" evidence="1"/>
<dbReference type="EMBL" id="CP000050">
    <property type="protein sequence ID" value="AAY47916.1"/>
    <property type="molecule type" value="Genomic_DNA"/>
</dbReference>
<dbReference type="RefSeq" id="WP_011038422.1">
    <property type="nucleotide sequence ID" value="NZ_CP155948.1"/>
</dbReference>
<dbReference type="SMR" id="Q4UYF7"/>
<dbReference type="GeneID" id="58012143"/>
<dbReference type="KEGG" id="xcb:XC_0841"/>
<dbReference type="HOGENOM" id="CLU_033821_0_1_6"/>
<dbReference type="UniPathway" id="UPA00047">
    <property type="reaction ID" value="UER00056"/>
</dbReference>
<dbReference type="UniPathway" id="UPA00049">
    <property type="reaction ID" value="UER00060"/>
</dbReference>
<dbReference type="Proteomes" id="UP000000420">
    <property type="component" value="Chromosome"/>
</dbReference>
<dbReference type="GO" id="GO:0005829">
    <property type="term" value="C:cytosol"/>
    <property type="evidence" value="ECO:0007669"/>
    <property type="project" value="TreeGrafter"/>
</dbReference>
<dbReference type="GO" id="GO:0004455">
    <property type="term" value="F:ketol-acid reductoisomerase activity"/>
    <property type="evidence" value="ECO:0007669"/>
    <property type="project" value="UniProtKB-UniRule"/>
</dbReference>
<dbReference type="GO" id="GO:0000287">
    <property type="term" value="F:magnesium ion binding"/>
    <property type="evidence" value="ECO:0007669"/>
    <property type="project" value="UniProtKB-UniRule"/>
</dbReference>
<dbReference type="GO" id="GO:0050661">
    <property type="term" value="F:NADP binding"/>
    <property type="evidence" value="ECO:0007669"/>
    <property type="project" value="InterPro"/>
</dbReference>
<dbReference type="GO" id="GO:0009097">
    <property type="term" value="P:isoleucine biosynthetic process"/>
    <property type="evidence" value="ECO:0007669"/>
    <property type="project" value="UniProtKB-UniRule"/>
</dbReference>
<dbReference type="GO" id="GO:0009099">
    <property type="term" value="P:L-valine biosynthetic process"/>
    <property type="evidence" value="ECO:0007669"/>
    <property type="project" value="UniProtKB-UniRule"/>
</dbReference>
<dbReference type="FunFam" id="3.40.50.720:FF:000023">
    <property type="entry name" value="Ketol-acid reductoisomerase (NADP(+))"/>
    <property type="match status" value="1"/>
</dbReference>
<dbReference type="Gene3D" id="6.10.240.10">
    <property type="match status" value="1"/>
</dbReference>
<dbReference type="Gene3D" id="3.40.50.720">
    <property type="entry name" value="NAD(P)-binding Rossmann-like Domain"/>
    <property type="match status" value="1"/>
</dbReference>
<dbReference type="HAMAP" id="MF_00435">
    <property type="entry name" value="IlvC"/>
    <property type="match status" value="1"/>
</dbReference>
<dbReference type="InterPro" id="IPR008927">
    <property type="entry name" value="6-PGluconate_DH-like_C_sf"/>
</dbReference>
<dbReference type="InterPro" id="IPR013023">
    <property type="entry name" value="KARI"/>
</dbReference>
<dbReference type="InterPro" id="IPR000506">
    <property type="entry name" value="KARI_C"/>
</dbReference>
<dbReference type="InterPro" id="IPR013116">
    <property type="entry name" value="KARI_N"/>
</dbReference>
<dbReference type="InterPro" id="IPR014359">
    <property type="entry name" value="KARI_prok"/>
</dbReference>
<dbReference type="InterPro" id="IPR036291">
    <property type="entry name" value="NAD(P)-bd_dom_sf"/>
</dbReference>
<dbReference type="NCBIfam" id="TIGR00465">
    <property type="entry name" value="ilvC"/>
    <property type="match status" value="1"/>
</dbReference>
<dbReference type="NCBIfam" id="NF004017">
    <property type="entry name" value="PRK05479.1"/>
    <property type="match status" value="1"/>
</dbReference>
<dbReference type="PANTHER" id="PTHR21371">
    <property type="entry name" value="KETOL-ACID REDUCTOISOMERASE, MITOCHONDRIAL"/>
    <property type="match status" value="1"/>
</dbReference>
<dbReference type="PANTHER" id="PTHR21371:SF1">
    <property type="entry name" value="KETOL-ACID REDUCTOISOMERASE, MITOCHONDRIAL"/>
    <property type="match status" value="1"/>
</dbReference>
<dbReference type="Pfam" id="PF01450">
    <property type="entry name" value="KARI_C"/>
    <property type="match status" value="1"/>
</dbReference>
<dbReference type="Pfam" id="PF07991">
    <property type="entry name" value="KARI_N"/>
    <property type="match status" value="1"/>
</dbReference>
<dbReference type="PIRSF" id="PIRSF000116">
    <property type="entry name" value="IlvC_gammaproteo"/>
    <property type="match status" value="1"/>
</dbReference>
<dbReference type="SUPFAM" id="SSF48179">
    <property type="entry name" value="6-phosphogluconate dehydrogenase C-terminal domain-like"/>
    <property type="match status" value="1"/>
</dbReference>
<dbReference type="SUPFAM" id="SSF51735">
    <property type="entry name" value="NAD(P)-binding Rossmann-fold domains"/>
    <property type="match status" value="1"/>
</dbReference>
<dbReference type="PROSITE" id="PS51851">
    <property type="entry name" value="KARI_C"/>
    <property type="match status" value="1"/>
</dbReference>
<dbReference type="PROSITE" id="PS51850">
    <property type="entry name" value="KARI_N"/>
    <property type="match status" value="1"/>
</dbReference>
<comment type="function">
    <text evidence="1">Involved in the biosynthesis of branched-chain amino acids (BCAA). Catalyzes an alkyl-migration followed by a ketol-acid reduction of (S)-2-acetolactate (S2AL) to yield (R)-2,3-dihydroxy-isovalerate. In the isomerase reaction, S2AL is rearranged via a Mg-dependent methyl migration to produce 3-hydroxy-3-methyl-2-ketobutyrate (HMKB). In the reductase reaction, this 2-ketoacid undergoes a metal-dependent reduction by NADPH to yield (R)-2,3-dihydroxy-isovalerate.</text>
</comment>
<comment type="catalytic activity">
    <reaction evidence="1">
        <text>(2R)-2,3-dihydroxy-3-methylbutanoate + NADP(+) = (2S)-2-acetolactate + NADPH + H(+)</text>
        <dbReference type="Rhea" id="RHEA:22068"/>
        <dbReference type="ChEBI" id="CHEBI:15378"/>
        <dbReference type="ChEBI" id="CHEBI:49072"/>
        <dbReference type="ChEBI" id="CHEBI:57783"/>
        <dbReference type="ChEBI" id="CHEBI:58349"/>
        <dbReference type="ChEBI" id="CHEBI:58476"/>
        <dbReference type="EC" id="1.1.1.86"/>
    </reaction>
</comment>
<comment type="catalytic activity">
    <reaction evidence="1">
        <text>(2R,3R)-2,3-dihydroxy-3-methylpentanoate + NADP(+) = (S)-2-ethyl-2-hydroxy-3-oxobutanoate + NADPH + H(+)</text>
        <dbReference type="Rhea" id="RHEA:13493"/>
        <dbReference type="ChEBI" id="CHEBI:15378"/>
        <dbReference type="ChEBI" id="CHEBI:49256"/>
        <dbReference type="ChEBI" id="CHEBI:49258"/>
        <dbReference type="ChEBI" id="CHEBI:57783"/>
        <dbReference type="ChEBI" id="CHEBI:58349"/>
        <dbReference type="EC" id="1.1.1.86"/>
    </reaction>
</comment>
<comment type="cofactor">
    <cofactor evidence="1">
        <name>Mg(2+)</name>
        <dbReference type="ChEBI" id="CHEBI:18420"/>
    </cofactor>
    <text evidence="1">Binds 2 magnesium ions per subunit.</text>
</comment>
<comment type="pathway">
    <text evidence="1">Amino-acid biosynthesis; L-isoleucine biosynthesis; L-isoleucine from 2-oxobutanoate: step 2/4.</text>
</comment>
<comment type="pathway">
    <text evidence="1">Amino-acid biosynthesis; L-valine biosynthesis; L-valine from pyruvate: step 2/4.</text>
</comment>
<comment type="similarity">
    <text evidence="1">Belongs to the ketol-acid reductoisomerase family.</text>
</comment>
<proteinExistence type="inferred from homology"/>